<geneLocation type="chloroplast"/>
<gene>
    <name type="primary">ycf46</name>
</gene>
<evidence type="ECO:0000255" key="1"/>
<evidence type="ECO:0000305" key="2"/>
<organism>
    <name type="scientific">Pyropia yezoensis</name>
    <name type="common">Susabi-nori</name>
    <name type="synonym">Porphyra yezoensis</name>
    <dbReference type="NCBI Taxonomy" id="2788"/>
    <lineage>
        <taxon>Eukaryota</taxon>
        <taxon>Rhodophyta</taxon>
        <taxon>Bangiophyceae</taxon>
        <taxon>Bangiales</taxon>
        <taxon>Bangiaceae</taxon>
        <taxon>Pyropia</taxon>
    </lineage>
</organism>
<sequence>MNFTQDLRLLLKSRYPIIVINTREEDRLEYIIKHSLNCSNSQQVYSWDFVDGYTNNPSDNGYAKRNPLLALEFIENLNNESLNLFLLKDFDSFLNEIVLIRKLRNLAKIIKTQSKHIIIISCKINIPFALNDIITVIDLPLPSLLEIKKEIIRLSKALNLNLNSELVNNITKSCQGLSIDRIRKVITKIIAQYNQIDSRSLPIIIEEKRQIINQTHLLEFYPYSKVNRDIGGLDVLKQWLQKRSRSFSKQSLNYGIPSPKGLLLVGIQGTGKSLTAKAIASDWMLPLLRLDMGKLFGGLVGESESKMREMINISEGLSPCILWIDEIDKAFSGLHSQGDSGTSARVFGTFITWLSEKKAPVFVVATANKIQSLPSEMLRKGRFDEIFFLDLPNRQERESIFKIHLSKVRPRSWQKYDIHELSLLCNKFSGAEIEQAIIESMHTAFSEEREFSTEDIKIAIKQFVPLAFTDKEQVESLQAWAGDGRARNASLT</sequence>
<feature type="chain" id="PRO_0000277310" description="Uncharacterized AAA domain-containing protein ycf46">
    <location>
        <begin position="1"/>
        <end position="492"/>
    </location>
</feature>
<feature type="binding site" evidence="1">
    <location>
        <begin position="266"/>
        <end position="273"/>
    </location>
    <ligand>
        <name>ATP</name>
        <dbReference type="ChEBI" id="CHEBI:30616"/>
    </ligand>
</feature>
<name>YCF46_PYRYE</name>
<dbReference type="EMBL" id="AP006715">
    <property type="protein sequence ID" value="BAE92313.1"/>
    <property type="molecule type" value="Genomic_DNA"/>
</dbReference>
<dbReference type="RefSeq" id="YP_536870.1">
    <property type="nucleotide sequence ID" value="NC_007932.1"/>
</dbReference>
<dbReference type="SMR" id="Q1XDU8"/>
<dbReference type="GeneID" id="3978994"/>
<dbReference type="GO" id="GO:0009507">
    <property type="term" value="C:chloroplast"/>
    <property type="evidence" value="ECO:0007669"/>
    <property type="project" value="UniProtKB-SubCell"/>
</dbReference>
<dbReference type="GO" id="GO:0005524">
    <property type="term" value="F:ATP binding"/>
    <property type="evidence" value="ECO:0007669"/>
    <property type="project" value="UniProtKB-KW"/>
</dbReference>
<dbReference type="GO" id="GO:0016887">
    <property type="term" value="F:ATP hydrolysis activity"/>
    <property type="evidence" value="ECO:0007669"/>
    <property type="project" value="InterPro"/>
</dbReference>
<dbReference type="CDD" id="cd19507">
    <property type="entry name" value="RecA-like_Ycf46-like"/>
    <property type="match status" value="1"/>
</dbReference>
<dbReference type="Gene3D" id="1.10.8.60">
    <property type="match status" value="1"/>
</dbReference>
<dbReference type="Gene3D" id="3.40.50.300">
    <property type="entry name" value="P-loop containing nucleotide triphosphate hydrolases"/>
    <property type="match status" value="1"/>
</dbReference>
<dbReference type="InterPro" id="IPR003593">
    <property type="entry name" value="AAA+_ATPase"/>
</dbReference>
<dbReference type="InterPro" id="IPR052381">
    <property type="entry name" value="AAA_domain_protein"/>
</dbReference>
<dbReference type="InterPro" id="IPR003959">
    <property type="entry name" value="ATPase_AAA_core"/>
</dbReference>
<dbReference type="InterPro" id="IPR027417">
    <property type="entry name" value="P-loop_NTPase"/>
</dbReference>
<dbReference type="PANTHER" id="PTHR42960">
    <property type="entry name" value="YCF46 PROTEIN"/>
    <property type="match status" value="1"/>
</dbReference>
<dbReference type="PANTHER" id="PTHR42960:SF1">
    <property type="entry name" value="YCF46 PROTEIN"/>
    <property type="match status" value="1"/>
</dbReference>
<dbReference type="Pfam" id="PF00004">
    <property type="entry name" value="AAA"/>
    <property type="match status" value="1"/>
</dbReference>
<dbReference type="SMART" id="SM00382">
    <property type="entry name" value="AAA"/>
    <property type="match status" value="1"/>
</dbReference>
<dbReference type="SUPFAM" id="SSF52540">
    <property type="entry name" value="P-loop containing nucleoside triphosphate hydrolases"/>
    <property type="match status" value="1"/>
</dbReference>
<comment type="subcellular location">
    <subcellularLocation>
        <location>Plastid</location>
        <location>Chloroplast</location>
    </subcellularLocation>
</comment>
<comment type="similarity">
    <text evidence="2">Belongs to the AAA ATPase family. Highly divergent.</text>
</comment>
<proteinExistence type="inferred from homology"/>
<reference key="1">
    <citation type="submission" date="2003-11" db="EMBL/GenBank/DDBJ databases">
        <title>Whole genome sequence of Porphyra yezoensis chloroplast.</title>
        <authorList>
            <person name="Kunimoto M."/>
            <person name="Morishima K."/>
            <person name="Yoshikawa M."/>
            <person name="Fukuda S."/>
            <person name="Kobayashi T."/>
            <person name="Kobayashi M."/>
            <person name="Okazaki T."/>
            <person name="Ohara I."/>
            <person name="Nakayama I."/>
        </authorList>
    </citation>
    <scope>NUCLEOTIDE SEQUENCE [LARGE SCALE GENOMIC DNA]</scope>
    <source>
        <strain>U-51</strain>
    </source>
</reference>
<protein>
    <recommendedName>
        <fullName>Uncharacterized AAA domain-containing protein ycf46</fullName>
    </recommendedName>
</protein>
<accession>Q1XDU8</accession>
<keyword id="KW-0067">ATP-binding</keyword>
<keyword id="KW-0150">Chloroplast</keyword>
<keyword id="KW-0547">Nucleotide-binding</keyword>
<keyword id="KW-0934">Plastid</keyword>